<organism>
    <name type="scientific">Geobacillus kaustophilus (strain HTA426)</name>
    <dbReference type="NCBI Taxonomy" id="235909"/>
    <lineage>
        <taxon>Bacteria</taxon>
        <taxon>Bacillati</taxon>
        <taxon>Bacillota</taxon>
        <taxon>Bacilli</taxon>
        <taxon>Bacillales</taxon>
        <taxon>Anoxybacillaceae</taxon>
        <taxon>Geobacillus</taxon>
        <taxon>Geobacillus thermoleovorans group</taxon>
    </lineage>
</organism>
<name>NUOK_GEOKA</name>
<gene>
    <name evidence="1" type="primary">nuoK</name>
    <name type="ordered locus">GK3348</name>
</gene>
<sequence length="101" mass="10791">MTLSAYLALALILFCIGLYGALTKRNTVIVLICIELMLNAVNINFVAFAKYGAHPSVHGHVFALFAIAVAAAEAAVGLAALIAFYRSRKTVQVDEANSLKH</sequence>
<accession>Q5KUK3</accession>
<dbReference type="EC" id="7.1.1.-" evidence="1"/>
<dbReference type="EMBL" id="BA000043">
    <property type="protein sequence ID" value="BAD77633.1"/>
    <property type="molecule type" value="Genomic_DNA"/>
</dbReference>
<dbReference type="RefSeq" id="WP_011232815.1">
    <property type="nucleotide sequence ID" value="NC_006510.1"/>
</dbReference>
<dbReference type="SMR" id="Q5KUK3"/>
<dbReference type="STRING" id="235909.GK3348"/>
<dbReference type="GeneID" id="32065233"/>
<dbReference type="KEGG" id="gka:GK3348"/>
<dbReference type="eggNOG" id="COG0713">
    <property type="taxonomic scope" value="Bacteria"/>
</dbReference>
<dbReference type="HOGENOM" id="CLU_144724_1_1_9"/>
<dbReference type="Proteomes" id="UP000001172">
    <property type="component" value="Chromosome"/>
</dbReference>
<dbReference type="GO" id="GO:0030964">
    <property type="term" value="C:NADH dehydrogenase complex"/>
    <property type="evidence" value="ECO:0007669"/>
    <property type="project" value="TreeGrafter"/>
</dbReference>
<dbReference type="GO" id="GO:0005886">
    <property type="term" value="C:plasma membrane"/>
    <property type="evidence" value="ECO:0007669"/>
    <property type="project" value="UniProtKB-SubCell"/>
</dbReference>
<dbReference type="GO" id="GO:0050136">
    <property type="term" value="F:NADH:ubiquinone reductase (non-electrogenic) activity"/>
    <property type="evidence" value="ECO:0007669"/>
    <property type="project" value="UniProtKB-UniRule"/>
</dbReference>
<dbReference type="GO" id="GO:0048038">
    <property type="term" value="F:quinone binding"/>
    <property type="evidence" value="ECO:0007669"/>
    <property type="project" value="UniProtKB-KW"/>
</dbReference>
<dbReference type="GO" id="GO:0042773">
    <property type="term" value="P:ATP synthesis coupled electron transport"/>
    <property type="evidence" value="ECO:0007669"/>
    <property type="project" value="InterPro"/>
</dbReference>
<dbReference type="FunFam" id="1.10.287.3510:FF:000001">
    <property type="entry name" value="NADH-quinone oxidoreductase subunit K"/>
    <property type="match status" value="1"/>
</dbReference>
<dbReference type="Gene3D" id="1.10.287.3510">
    <property type="match status" value="1"/>
</dbReference>
<dbReference type="HAMAP" id="MF_01456">
    <property type="entry name" value="NDH1_NuoK"/>
    <property type="match status" value="1"/>
</dbReference>
<dbReference type="InterPro" id="IPR001133">
    <property type="entry name" value="NADH_UbQ_OxRdtase_chain4L/K"/>
</dbReference>
<dbReference type="InterPro" id="IPR039428">
    <property type="entry name" value="NUOK/Mnh_C1-like"/>
</dbReference>
<dbReference type="NCBIfam" id="NF004320">
    <property type="entry name" value="PRK05715.1-2"/>
    <property type="match status" value="1"/>
</dbReference>
<dbReference type="NCBIfam" id="NF004321">
    <property type="entry name" value="PRK05715.1-3"/>
    <property type="match status" value="1"/>
</dbReference>
<dbReference type="NCBIfam" id="NF004322">
    <property type="entry name" value="PRK05715.1-4"/>
    <property type="match status" value="1"/>
</dbReference>
<dbReference type="NCBIfam" id="NF004323">
    <property type="entry name" value="PRK05715.1-5"/>
    <property type="match status" value="1"/>
</dbReference>
<dbReference type="PANTHER" id="PTHR11434:SF16">
    <property type="entry name" value="NADH-UBIQUINONE OXIDOREDUCTASE CHAIN 4L"/>
    <property type="match status" value="1"/>
</dbReference>
<dbReference type="PANTHER" id="PTHR11434">
    <property type="entry name" value="NADH-UBIQUINONE OXIDOREDUCTASE SUBUNIT ND4L"/>
    <property type="match status" value="1"/>
</dbReference>
<dbReference type="Pfam" id="PF00420">
    <property type="entry name" value="Oxidored_q2"/>
    <property type="match status" value="1"/>
</dbReference>
<reference key="1">
    <citation type="journal article" date="2004" name="Nucleic Acids Res.">
        <title>Thermoadaptation trait revealed by the genome sequence of thermophilic Geobacillus kaustophilus.</title>
        <authorList>
            <person name="Takami H."/>
            <person name="Takaki Y."/>
            <person name="Chee G.-J."/>
            <person name="Nishi S."/>
            <person name="Shimamura S."/>
            <person name="Suzuki H."/>
            <person name="Matsui S."/>
            <person name="Uchiyama I."/>
        </authorList>
    </citation>
    <scope>NUCLEOTIDE SEQUENCE [LARGE SCALE GENOMIC DNA]</scope>
    <source>
        <strain>HTA426</strain>
    </source>
</reference>
<keyword id="KW-1003">Cell membrane</keyword>
<keyword id="KW-0472">Membrane</keyword>
<keyword id="KW-0520">NAD</keyword>
<keyword id="KW-0874">Quinone</keyword>
<keyword id="KW-1185">Reference proteome</keyword>
<keyword id="KW-1278">Translocase</keyword>
<keyword id="KW-0812">Transmembrane</keyword>
<keyword id="KW-1133">Transmembrane helix</keyword>
<keyword id="KW-0813">Transport</keyword>
<feature type="chain" id="PRO_0000390073" description="NADH-quinone oxidoreductase subunit K">
    <location>
        <begin position="1"/>
        <end position="101"/>
    </location>
</feature>
<feature type="transmembrane region" description="Helical" evidence="1">
    <location>
        <begin position="2"/>
        <end position="22"/>
    </location>
</feature>
<feature type="transmembrane region" description="Helical" evidence="1">
    <location>
        <begin position="28"/>
        <end position="48"/>
    </location>
</feature>
<feature type="transmembrane region" description="Helical" evidence="1">
    <location>
        <begin position="62"/>
        <end position="82"/>
    </location>
</feature>
<protein>
    <recommendedName>
        <fullName evidence="1">NADH-quinone oxidoreductase subunit K</fullName>
        <ecNumber evidence="1">7.1.1.-</ecNumber>
    </recommendedName>
    <alternativeName>
        <fullName evidence="1">NADH dehydrogenase I subunit K</fullName>
    </alternativeName>
    <alternativeName>
        <fullName evidence="1">NDH-1 subunit K</fullName>
    </alternativeName>
</protein>
<comment type="function">
    <text evidence="1">NDH-1 shuttles electrons from NADH, via FMN and iron-sulfur (Fe-S) centers, to quinones in the respiratory chain. The immediate electron acceptor for the enzyme in this species is believed to be a menaquinone. Couples the redox reaction to proton translocation (for every two electrons transferred, four hydrogen ions are translocated across the cytoplasmic membrane), and thus conserves the redox energy in a proton gradient.</text>
</comment>
<comment type="catalytic activity">
    <reaction evidence="1">
        <text>a quinone + NADH + 5 H(+)(in) = a quinol + NAD(+) + 4 H(+)(out)</text>
        <dbReference type="Rhea" id="RHEA:57888"/>
        <dbReference type="ChEBI" id="CHEBI:15378"/>
        <dbReference type="ChEBI" id="CHEBI:24646"/>
        <dbReference type="ChEBI" id="CHEBI:57540"/>
        <dbReference type="ChEBI" id="CHEBI:57945"/>
        <dbReference type="ChEBI" id="CHEBI:132124"/>
    </reaction>
</comment>
<comment type="subunit">
    <text evidence="1">NDH-1 is composed of 14 different subunits. Subunits NuoA, H, J, K, L, M, N constitute the membrane sector of the complex.</text>
</comment>
<comment type="subcellular location">
    <subcellularLocation>
        <location evidence="1">Cell membrane</location>
        <topology evidence="1">Multi-pass membrane protein</topology>
    </subcellularLocation>
</comment>
<comment type="similarity">
    <text evidence="1">Belongs to the complex I subunit 4L family.</text>
</comment>
<proteinExistence type="inferred from homology"/>
<evidence type="ECO:0000255" key="1">
    <source>
        <dbReference type="HAMAP-Rule" id="MF_01456"/>
    </source>
</evidence>